<protein>
    <recommendedName>
        <fullName evidence="1">Light-independent protochlorophyllide reductase subunit B</fullName>
        <shortName evidence="1">DPOR subunit B</shortName>
        <shortName evidence="1">LI-POR subunit B</shortName>
        <ecNumber evidence="1">1.3.7.7</ecNumber>
    </recommendedName>
</protein>
<keyword id="KW-0004">4Fe-4S</keyword>
<keyword id="KW-0067">ATP-binding</keyword>
<keyword id="KW-0149">Chlorophyll biosynthesis</keyword>
<keyword id="KW-0408">Iron</keyword>
<keyword id="KW-0411">Iron-sulfur</keyword>
<keyword id="KW-0479">Metal-binding</keyword>
<keyword id="KW-0547">Nucleotide-binding</keyword>
<keyword id="KW-0560">Oxidoreductase</keyword>
<keyword id="KW-0602">Photosynthesis</keyword>
<keyword id="KW-1185">Reference proteome</keyword>
<gene>
    <name evidence="1" type="primary">chlB</name>
    <name type="ordered locus">Synpcc7942_1838</name>
    <name type="ORF">sem0009</name>
</gene>
<name>CHLB_SYNE7</name>
<comment type="function">
    <text evidence="1">Component of the dark-operative protochlorophyllide reductase (DPOR) that uses Mg-ATP and reduced ferredoxin to reduce ring D of protochlorophyllide (Pchlide) to form chlorophyllide a (Chlide). This reaction is light-independent. The NB-protein (ChlN-ChlB) is the catalytic component of the complex.</text>
</comment>
<comment type="catalytic activity">
    <reaction evidence="1">
        <text>chlorophyllide a + oxidized 2[4Fe-4S]-[ferredoxin] + 2 ADP + 2 phosphate = protochlorophyllide a + reduced 2[4Fe-4S]-[ferredoxin] + 2 ATP + 2 H2O</text>
        <dbReference type="Rhea" id="RHEA:28202"/>
        <dbReference type="Rhea" id="RHEA-COMP:10002"/>
        <dbReference type="Rhea" id="RHEA-COMP:10004"/>
        <dbReference type="ChEBI" id="CHEBI:15377"/>
        <dbReference type="ChEBI" id="CHEBI:30616"/>
        <dbReference type="ChEBI" id="CHEBI:33722"/>
        <dbReference type="ChEBI" id="CHEBI:33723"/>
        <dbReference type="ChEBI" id="CHEBI:43474"/>
        <dbReference type="ChEBI" id="CHEBI:83348"/>
        <dbReference type="ChEBI" id="CHEBI:83350"/>
        <dbReference type="ChEBI" id="CHEBI:456216"/>
        <dbReference type="EC" id="1.3.7.7"/>
    </reaction>
</comment>
<comment type="cofactor">
    <cofactor evidence="1">
        <name>[4Fe-4S] cluster</name>
        <dbReference type="ChEBI" id="CHEBI:49883"/>
    </cofactor>
    <text evidence="1">Binds 1 [4Fe-4S] cluster per heterodimer. The cluster is bound at the heterodimer interface by residues from both subunits.</text>
</comment>
<comment type="pathway">
    <text evidence="1">Porphyrin-containing compound metabolism; chlorophyll biosynthesis (light-independent).</text>
</comment>
<comment type="subunit">
    <text evidence="1">Protochlorophyllide reductase is composed of three subunits; ChlL, ChlN and ChlB. Forms a heterotetramer of two ChlB and two ChlN subunits.</text>
</comment>
<comment type="similarity">
    <text evidence="1">Belongs to the ChlB/BchB/BchZ family.</text>
</comment>
<reference key="1">
    <citation type="submission" date="2002-10" db="EMBL/GenBank/DDBJ databases">
        <title>Synechococcus elongatus PCC7942 cosmid 4G8.</title>
        <authorList>
            <person name="Holtman C.K."/>
            <person name="Sandoval P."/>
            <person name="Chen Y."/>
            <person name="Socias T."/>
            <person name="McMurtry S."/>
            <person name="Gonzalez A."/>
            <person name="Salinas I."/>
            <person name="Golden S.S."/>
            <person name="Youderian P."/>
        </authorList>
    </citation>
    <scope>NUCLEOTIDE SEQUENCE [GENOMIC DNA]</scope>
</reference>
<reference key="2">
    <citation type="submission" date="2005-08" db="EMBL/GenBank/DDBJ databases">
        <title>Complete sequence of chromosome 1 of Synechococcus elongatus PCC 7942.</title>
        <authorList>
            <consortium name="US DOE Joint Genome Institute"/>
            <person name="Copeland A."/>
            <person name="Lucas S."/>
            <person name="Lapidus A."/>
            <person name="Barry K."/>
            <person name="Detter J.C."/>
            <person name="Glavina T."/>
            <person name="Hammon N."/>
            <person name="Israni S."/>
            <person name="Pitluck S."/>
            <person name="Schmutz J."/>
            <person name="Larimer F."/>
            <person name="Land M."/>
            <person name="Kyrpides N."/>
            <person name="Lykidis A."/>
            <person name="Golden S."/>
            <person name="Richardson P."/>
        </authorList>
    </citation>
    <scope>NUCLEOTIDE SEQUENCE [LARGE SCALE GENOMIC DNA]</scope>
    <source>
        <strain>ATCC 33912 / PCC 7942 / FACHB-805</strain>
    </source>
</reference>
<sequence>MKLAYWMYAGPAHIGTLRISSSFRNVHAIMHAPLGDDYFNVMRSMLERERNFTPVTTSVVDRNVLARGSQEKVIDNILRKDTEERPDLIVLTPTCTSSILQEDLQNFVERAKESAQCDVLLADVNHYRVNELQAADRTLEQIVRFYLDRAQRQGTLPSQRTEQPSVNILGMTTLGFHNRHDTTELQRLMADLGITVNAVIPAGASVEELQHLPRAWFNLVPYREVGLLTAQYLQDTFDQPMVAIAPMGITATADCIRQIQQVLNQQGAAVDFEPFIDRQTRFASEAAWFSHSIDCQNLTGKRAVVFGDNTHAAAFTKILSREMGIHVVLAGTYCKHDADWFEAEVAGYCDRVLISDDHNAIADAIAELEPAAIFGTQMERHVGKRLNIPCGVIAAPVHIQNFPVGYRPFVGYEGANQIVDLVYNSFTLGMEDHLLEIFGGHDTKEVLTKTVSAGSDLDWKPDGLTELNRIPGFVRGKVKRNTEKYAREQGLTAITAEVLYAAKEALGA</sequence>
<feature type="chain" id="PRO_0000219806" description="Light-independent protochlorophyllide reductase subunit B">
    <location>
        <begin position="1"/>
        <end position="508"/>
    </location>
</feature>
<feature type="active site" description="Proton donor" evidence="1">
    <location>
        <position position="294"/>
    </location>
</feature>
<feature type="binding site" evidence="1">
    <location>
        <position position="36"/>
    </location>
    <ligand>
        <name>[4Fe-4S] cluster</name>
        <dbReference type="ChEBI" id="CHEBI:49883"/>
        <note>ligand shared with heterodimeric partner</note>
    </ligand>
</feature>
<feature type="binding site" evidence="1">
    <location>
        <begin position="429"/>
        <end position="430"/>
    </location>
    <ligand>
        <name>substrate</name>
    </ligand>
</feature>
<feature type="sequence conflict" description="In Ref. 1; AAN46159." evidence="2" ref="1">
    <original>P</original>
    <variation>A</variation>
    <location>
        <position position="246"/>
    </location>
</feature>
<feature type="sequence conflict" description="In Ref. 1; AAN46159." evidence="2" ref="1">
    <original>A</original>
    <variation>G</variation>
    <location>
        <position position="251"/>
    </location>
</feature>
<feature type="sequence conflict" description="In Ref. 1; AAN46159." evidence="2" ref="1">
    <original>D</original>
    <variation>K</variation>
    <location>
        <position position="254"/>
    </location>
</feature>
<feature type="sequence conflict" description="In Ref. 1; AAN46159." evidence="2" ref="1">
    <original>R</original>
    <variation>C</variation>
    <location>
        <position position="257"/>
    </location>
</feature>
<feature type="sequence conflict" description="In Ref. 1; AAN46159." evidence="2" ref="1">
    <original>A</original>
    <variation>T</variation>
    <location>
        <position position="286"/>
    </location>
</feature>
<feature type="sequence conflict" description="In Ref. 1; AAN46159." evidence="2" ref="1">
    <original>S</original>
    <variation>N</variation>
    <location>
        <position position="290"/>
    </location>
</feature>
<feature type="sequence conflict" description="In Ref. 1; AAN46159." evidence="2" ref="1">
    <original>A</original>
    <variation>T</variation>
    <location>
        <position position="303"/>
    </location>
</feature>
<proteinExistence type="inferred from homology"/>
<dbReference type="EC" id="1.3.7.7" evidence="1"/>
<dbReference type="EMBL" id="AY157498">
    <property type="protein sequence ID" value="AAN46159.1"/>
    <property type="molecule type" value="Genomic_DNA"/>
</dbReference>
<dbReference type="EMBL" id="CP000100">
    <property type="protein sequence ID" value="ABB57868.1"/>
    <property type="molecule type" value="Genomic_DNA"/>
</dbReference>
<dbReference type="SMR" id="Q8GJN0"/>
<dbReference type="STRING" id="1140.Synpcc7942_1838"/>
<dbReference type="PaxDb" id="1140-Synpcc7942_1838"/>
<dbReference type="KEGG" id="syf:Synpcc7942_1838"/>
<dbReference type="eggNOG" id="COG2710">
    <property type="taxonomic scope" value="Bacteria"/>
</dbReference>
<dbReference type="HOGENOM" id="CLU_025470_0_0_3"/>
<dbReference type="OrthoDB" id="5717231at2"/>
<dbReference type="BioCyc" id="SYNEL:SYNPCC7942_1838-MONOMER"/>
<dbReference type="UniPathway" id="UPA00670"/>
<dbReference type="Proteomes" id="UP000889800">
    <property type="component" value="Chromosome"/>
</dbReference>
<dbReference type="GO" id="GO:0051539">
    <property type="term" value="F:4 iron, 4 sulfur cluster binding"/>
    <property type="evidence" value="ECO:0007669"/>
    <property type="project" value="UniProtKB-UniRule"/>
</dbReference>
<dbReference type="GO" id="GO:0005524">
    <property type="term" value="F:ATP binding"/>
    <property type="evidence" value="ECO:0007669"/>
    <property type="project" value="UniProtKB-UniRule"/>
</dbReference>
<dbReference type="GO" id="GO:0046872">
    <property type="term" value="F:metal ion binding"/>
    <property type="evidence" value="ECO:0007669"/>
    <property type="project" value="UniProtKB-KW"/>
</dbReference>
<dbReference type="GO" id="GO:0016730">
    <property type="term" value="F:oxidoreductase activity, acting on iron-sulfur proteins as donors"/>
    <property type="evidence" value="ECO:0007669"/>
    <property type="project" value="InterPro"/>
</dbReference>
<dbReference type="GO" id="GO:0016636">
    <property type="term" value="F:oxidoreductase activity, acting on the CH-CH group of donors, iron-sulfur protein as acceptor"/>
    <property type="evidence" value="ECO:0007669"/>
    <property type="project" value="UniProtKB-UniRule"/>
</dbReference>
<dbReference type="GO" id="GO:0036068">
    <property type="term" value="P:light-independent chlorophyll biosynthetic process"/>
    <property type="evidence" value="ECO:0007669"/>
    <property type="project" value="UniProtKB-UniRule"/>
</dbReference>
<dbReference type="GO" id="GO:0019685">
    <property type="term" value="P:photosynthesis, dark reaction"/>
    <property type="evidence" value="ECO:0007669"/>
    <property type="project" value="InterPro"/>
</dbReference>
<dbReference type="CDD" id="cd01981">
    <property type="entry name" value="Pchlide_reductase_B"/>
    <property type="match status" value="1"/>
</dbReference>
<dbReference type="Gene3D" id="1.20.89.20">
    <property type="match status" value="1"/>
</dbReference>
<dbReference type="Gene3D" id="3.40.50.1980">
    <property type="entry name" value="Nitrogenase molybdenum iron protein domain"/>
    <property type="match status" value="3"/>
</dbReference>
<dbReference type="Gene3D" id="1.10.8.550">
    <property type="entry name" value="Proto-chlorophyllide reductase 57 kD subunit B"/>
    <property type="match status" value="1"/>
</dbReference>
<dbReference type="HAMAP" id="MF_00353">
    <property type="entry name" value="ChlB_BchB"/>
    <property type="match status" value="1"/>
</dbReference>
<dbReference type="InterPro" id="IPR050152">
    <property type="entry name" value="ChlB/BchB/BchZ"/>
</dbReference>
<dbReference type="InterPro" id="IPR013580">
    <property type="entry name" value="LI-POR_suB-like_C"/>
</dbReference>
<dbReference type="InterPro" id="IPR000510">
    <property type="entry name" value="Nase/OxRdtase_comp1"/>
</dbReference>
<dbReference type="InterPro" id="IPR042298">
    <property type="entry name" value="P-CP_red_C"/>
</dbReference>
<dbReference type="InterPro" id="IPR005969">
    <property type="entry name" value="Protochl_reductB"/>
</dbReference>
<dbReference type="InterPro" id="IPR016209">
    <property type="entry name" value="Protochlorophyllide_Rdtase"/>
</dbReference>
<dbReference type="NCBIfam" id="TIGR01278">
    <property type="entry name" value="DPOR_BchB"/>
    <property type="match status" value="1"/>
</dbReference>
<dbReference type="PANTHER" id="PTHR33712">
    <property type="entry name" value="LIGHT-INDEPENDENT PROTOCHLOROPHYLLIDE REDUCTASE SUBUNIT B"/>
    <property type="match status" value="1"/>
</dbReference>
<dbReference type="PANTHER" id="PTHR33712:SF7">
    <property type="entry name" value="LIGHT-INDEPENDENT PROTOCHLOROPHYLLIDE REDUCTASE SUBUNIT B"/>
    <property type="match status" value="1"/>
</dbReference>
<dbReference type="Pfam" id="PF00148">
    <property type="entry name" value="Oxidored_nitro"/>
    <property type="match status" value="1"/>
</dbReference>
<dbReference type="Pfam" id="PF08369">
    <property type="entry name" value="PCP_red"/>
    <property type="match status" value="1"/>
</dbReference>
<dbReference type="PIRSF" id="PIRSF000163">
    <property type="entry name" value="PCP_ChlB"/>
    <property type="match status" value="1"/>
</dbReference>
<dbReference type="SUPFAM" id="SSF53807">
    <property type="entry name" value="Helical backbone' metal receptor"/>
    <property type="match status" value="1"/>
</dbReference>
<accession>Q8GJN0</accession>
<accession>Q31M51</accession>
<evidence type="ECO:0000255" key="1">
    <source>
        <dbReference type="HAMAP-Rule" id="MF_00353"/>
    </source>
</evidence>
<evidence type="ECO:0000305" key="2"/>
<organism>
    <name type="scientific">Synechococcus elongatus (strain ATCC 33912 / PCC 7942 / FACHB-805)</name>
    <name type="common">Anacystis nidulans R2</name>
    <dbReference type="NCBI Taxonomy" id="1140"/>
    <lineage>
        <taxon>Bacteria</taxon>
        <taxon>Bacillati</taxon>
        <taxon>Cyanobacteriota</taxon>
        <taxon>Cyanophyceae</taxon>
        <taxon>Synechococcales</taxon>
        <taxon>Synechococcaceae</taxon>
        <taxon>Synechococcus</taxon>
    </lineage>
</organism>